<organism>
    <name type="scientific">Shewanella loihica (strain ATCC BAA-1088 / PV-4)</name>
    <dbReference type="NCBI Taxonomy" id="323850"/>
    <lineage>
        <taxon>Bacteria</taxon>
        <taxon>Pseudomonadati</taxon>
        <taxon>Pseudomonadota</taxon>
        <taxon>Gammaproteobacteria</taxon>
        <taxon>Alteromonadales</taxon>
        <taxon>Shewanellaceae</taxon>
        <taxon>Shewanella</taxon>
    </lineage>
</organism>
<gene>
    <name evidence="1" type="primary">purA</name>
    <name type="ordered locus">Shew_3291</name>
</gene>
<name>PURA_SHELP</name>
<proteinExistence type="inferred from homology"/>
<keyword id="KW-0963">Cytoplasm</keyword>
<keyword id="KW-0342">GTP-binding</keyword>
<keyword id="KW-0436">Ligase</keyword>
<keyword id="KW-0460">Magnesium</keyword>
<keyword id="KW-0479">Metal-binding</keyword>
<keyword id="KW-0547">Nucleotide-binding</keyword>
<keyword id="KW-0658">Purine biosynthesis</keyword>
<keyword id="KW-1185">Reference proteome</keyword>
<accession>A3QI59</accession>
<feature type="chain" id="PRO_1000000918" description="Adenylosuccinate synthetase">
    <location>
        <begin position="1"/>
        <end position="431"/>
    </location>
</feature>
<feature type="active site" description="Proton acceptor" evidence="1">
    <location>
        <position position="14"/>
    </location>
</feature>
<feature type="active site" description="Proton donor" evidence="1">
    <location>
        <position position="42"/>
    </location>
</feature>
<feature type="binding site" evidence="1">
    <location>
        <begin position="13"/>
        <end position="19"/>
    </location>
    <ligand>
        <name>GTP</name>
        <dbReference type="ChEBI" id="CHEBI:37565"/>
    </ligand>
</feature>
<feature type="binding site" description="in other chain" evidence="1">
    <location>
        <begin position="14"/>
        <end position="17"/>
    </location>
    <ligand>
        <name>IMP</name>
        <dbReference type="ChEBI" id="CHEBI:58053"/>
        <note>ligand shared between dimeric partners</note>
    </ligand>
</feature>
<feature type="binding site" evidence="1">
    <location>
        <position position="14"/>
    </location>
    <ligand>
        <name>Mg(2+)</name>
        <dbReference type="ChEBI" id="CHEBI:18420"/>
    </ligand>
</feature>
<feature type="binding site" description="in other chain" evidence="1">
    <location>
        <begin position="39"/>
        <end position="42"/>
    </location>
    <ligand>
        <name>IMP</name>
        <dbReference type="ChEBI" id="CHEBI:58053"/>
        <note>ligand shared between dimeric partners</note>
    </ligand>
</feature>
<feature type="binding site" evidence="1">
    <location>
        <begin position="41"/>
        <end position="43"/>
    </location>
    <ligand>
        <name>GTP</name>
        <dbReference type="ChEBI" id="CHEBI:37565"/>
    </ligand>
</feature>
<feature type="binding site" evidence="1">
    <location>
        <position position="41"/>
    </location>
    <ligand>
        <name>Mg(2+)</name>
        <dbReference type="ChEBI" id="CHEBI:18420"/>
    </ligand>
</feature>
<feature type="binding site" description="in other chain" evidence="1">
    <location>
        <position position="130"/>
    </location>
    <ligand>
        <name>IMP</name>
        <dbReference type="ChEBI" id="CHEBI:58053"/>
        <note>ligand shared between dimeric partners</note>
    </ligand>
</feature>
<feature type="binding site" evidence="1">
    <location>
        <position position="144"/>
    </location>
    <ligand>
        <name>IMP</name>
        <dbReference type="ChEBI" id="CHEBI:58053"/>
        <note>ligand shared between dimeric partners</note>
    </ligand>
</feature>
<feature type="binding site" description="in other chain" evidence="1">
    <location>
        <position position="225"/>
    </location>
    <ligand>
        <name>IMP</name>
        <dbReference type="ChEBI" id="CHEBI:58053"/>
        <note>ligand shared between dimeric partners</note>
    </ligand>
</feature>
<feature type="binding site" description="in other chain" evidence="1">
    <location>
        <position position="240"/>
    </location>
    <ligand>
        <name>IMP</name>
        <dbReference type="ChEBI" id="CHEBI:58053"/>
        <note>ligand shared between dimeric partners</note>
    </ligand>
</feature>
<feature type="binding site" evidence="1">
    <location>
        <begin position="300"/>
        <end position="306"/>
    </location>
    <ligand>
        <name>substrate</name>
    </ligand>
</feature>
<feature type="binding site" description="in other chain" evidence="1">
    <location>
        <position position="304"/>
    </location>
    <ligand>
        <name>IMP</name>
        <dbReference type="ChEBI" id="CHEBI:58053"/>
        <note>ligand shared between dimeric partners</note>
    </ligand>
</feature>
<feature type="binding site" evidence="1">
    <location>
        <position position="306"/>
    </location>
    <ligand>
        <name>GTP</name>
        <dbReference type="ChEBI" id="CHEBI:37565"/>
    </ligand>
</feature>
<feature type="binding site" evidence="1">
    <location>
        <begin position="332"/>
        <end position="334"/>
    </location>
    <ligand>
        <name>GTP</name>
        <dbReference type="ChEBI" id="CHEBI:37565"/>
    </ligand>
</feature>
<feature type="binding site" evidence="1">
    <location>
        <begin position="415"/>
        <end position="417"/>
    </location>
    <ligand>
        <name>GTP</name>
        <dbReference type="ChEBI" id="CHEBI:37565"/>
    </ligand>
</feature>
<evidence type="ECO:0000255" key="1">
    <source>
        <dbReference type="HAMAP-Rule" id="MF_00011"/>
    </source>
</evidence>
<sequence length="431" mass="46861">MGKNVVVLGTQWGDEGKGKIVDLLTEQAKYVVRYQGGHNAGHTLVIDGDKTVLHLIPSGILRDNVKCIIGNGVVLAPDALMKEINMLKERGVPVEERLLISEACPLILPFHCALDIAREKARGNKAIGTTGRGIGPAYEDKISRRGLRVGDLFNAELFAEKLKEVMAYHNFMLTEYYGCEAVDYETTLKDALAIADYLKSMCTDVTELLDQARKNGDNILFEGAQGTLLDIDHGTYPFVTSSNTTAGGVATGSGFGPRHLDYVCGIIKAYTTRVGAGPFPTELRDEIGDHLGTKGQEFGATTGRKRRPGWLDIVAMKRAVQINSISGFCLTKLDVLDGLKEVKLCVGYQYPDGSISTVTPLAAEGYEQVTPVLETMPGWSESTFGATSIDQLPQAALDYIKRIEELLETPVDIISTGPDRNETMILVNPFS</sequence>
<comment type="function">
    <text evidence="1">Plays an important role in the de novo pathway of purine nucleotide biosynthesis. Catalyzes the first committed step in the biosynthesis of AMP from IMP.</text>
</comment>
<comment type="catalytic activity">
    <reaction evidence="1">
        <text>IMP + L-aspartate + GTP = N(6)-(1,2-dicarboxyethyl)-AMP + GDP + phosphate + 2 H(+)</text>
        <dbReference type="Rhea" id="RHEA:15753"/>
        <dbReference type="ChEBI" id="CHEBI:15378"/>
        <dbReference type="ChEBI" id="CHEBI:29991"/>
        <dbReference type="ChEBI" id="CHEBI:37565"/>
        <dbReference type="ChEBI" id="CHEBI:43474"/>
        <dbReference type="ChEBI" id="CHEBI:57567"/>
        <dbReference type="ChEBI" id="CHEBI:58053"/>
        <dbReference type="ChEBI" id="CHEBI:58189"/>
        <dbReference type="EC" id="6.3.4.4"/>
    </reaction>
</comment>
<comment type="cofactor">
    <cofactor evidence="1">
        <name>Mg(2+)</name>
        <dbReference type="ChEBI" id="CHEBI:18420"/>
    </cofactor>
    <text evidence="1">Binds 1 Mg(2+) ion per subunit.</text>
</comment>
<comment type="pathway">
    <text evidence="1">Purine metabolism; AMP biosynthesis via de novo pathway; AMP from IMP: step 1/2.</text>
</comment>
<comment type="subunit">
    <text evidence="1">Homodimer.</text>
</comment>
<comment type="subcellular location">
    <subcellularLocation>
        <location evidence="1">Cytoplasm</location>
    </subcellularLocation>
</comment>
<comment type="similarity">
    <text evidence="1">Belongs to the adenylosuccinate synthetase family.</text>
</comment>
<protein>
    <recommendedName>
        <fullName evidence="1">Adenylosuccinate synthetase</fullName>
        <shortName evidence="1">AMPSase</shortName>
        <shortName evidence="1">AdSS</shortName>
        <ecNumber evidence="1">6.3.4.4</ecNumber>
    </recommendedName>
    <alternativeName>
        <fullName evidence="1">IMP--aspartate ligase</fullName>
    </alternativeName>
</protein>
<dbReference type="EC" id="6.3.4.4" evidence="1"/>
<dbReference type="EMBL" id="CP000606">
    <property type="protein sequence ID" value="ABO25157.1"/>
    <property type="molecule type" value="Genomic_DNA"/>
</dbReference>
<dbReference type="RefSeq" id="WP_011867087.1">
    <property type="nucleotide sequence ID" value="NC_009092.1"/>
</dbReference>
<dbReference type="SMR" id="A3QI59"/>
<dbReference type="STRING" id="323850.Shew_3291"/>
<dbReference type="KEGG" id="slo:Shew_3291"/>
<dbReference type="eggNOG" id="COG0104">
    <property type="taxonomic scope" value="Bacteria"/>
</dbReference>
<dbReference type="HOGENOM" id="CLU_029848_0_0_6"/>
<dbReference type="OrthoDB" id="9807553at2"/>
<dbReference type="UniPathway" id="UPA00075">
    <property type="reaction ID" value="UER00335"/>
</dbReference>
<dbReference type="Proteomes" id="UP000001558">
    <property type="component" value="Chromosome"/>
</dbReference>
<dbReference type="GO" id="GO:0005737">
    <property type="term" value="C:cytoplasm"/>
    <property type="evidence" value="ECO:0007669"/>
    <property type="project" value="UniProtKB-SubCell"/>
</dbReference>
<dbReference type="GO" id="GO:0004019">
    <property type="term" value="F:adenylosuccinate synthase activity"/>
    <property type="evidence" value="ECO:0007669"/>
    <property type="project" value="UniProtKB-UniRule"/>
</dbReference>
<dbReference type="GO" id="GO:0005525">
    <property type="term" value="F:GTP binding"/>
    <property type="evidence" value="ECO:0007669"/>
    <property type="project" value="UniProtKB-UniRule"/>
</dbReference>
<dbReference type="GO" id="GO:0000287">
    <property type="term" value="F:magnesium ion binding"/>
    <property type="evidence" value="ECO:0007669"/>
    <property type="project" value="UniProtKB-UniRule"/>
</dbReference>
<dbReference type="GO" id="GO:0044208">
    <property type="term" value="P:'de novo' AMP biosynthetic process"/>
    <property type="evidence" value="ECO:0007669"/>
    <property type="project" value="UniProtKB-UniRule"/>
</dbReference>
<dbReference type="GO" id="GO:0046040">
    <property type="term" value="P:IMP metabolic process"/>
    <property type="evidence" value="ECO:0007669"/>
    <property type="project" value="TreeGrafter"/>
</dbReference>
<dbReference type="CDD" id="cd03108">
    <property type="entry name" value="AdSS"/>
    <property type="match status" value="1"/>
</dbReference>
<dbReference type="FunFam" id="1.10.300.10:FF:000001">
    <property type="entry name" value="Adenylosuccinate synthetase"/>
    <property type="match status" value="1"/>
</dbReference>
<dbReference type="FunFam" id="3.90.170.10:FF:000001">
    <property type="entry name" value="Adenylosuccinate synthetase"/>
    <property type="match status" value="1"/>
</dbReference>
<dbReference type="Gene3D" id="3.40.440.10">
    <property type="entry name" value="Adenylosuccinate Synthetase, subunit A, domain 1"/>
    <property type="match status" value="1"/>
</dbReference>
<dbReference type="Gene3D" id="1.10.300.10">
    <property type="entry name" value="Adenylosuccinate Synthetase, subunit A, domain 2"/>
    <property type="match status" value="1"/>
</dbReference>
<dbReference type="Gene3D" id="3.90.170.10">
    <property type="entry name" value="Adenylosuccinate Synthetase, subunit A, domain 3"/>
    <property type="match status" value="1"/>
</dbReference>
<dbReference type="HAMAP" id="MF_00011">
    <property type="entry name" value="Adenylosucc_synth"/>
    <property type="match status" value="1"/>
</dbReference>
<dbReference type="InterPro" id="IPR018220">
    <property type="entry name" value="Adenylosuccin_syn_GTP-bd"/>
</dbReference>
<dbReference type="InterPro" id="IPR033128">
    <property type="entry name" value="Adenylosuccin_syn_Lys_AS"/>
</dbReference>
<dbReference type="InterPro" id="IPR042109">
    <property type="entry name" value="Adenylosuccinate_synth_dom1"/>
</dbReference>
<dbReference type="InterPro" id="IPR042110">
    <property type="entry name" value="Adenylosuccinate_synth_dom2"/>
</dbReference>
<dbReference type="InterPro" id="IPR042111">
    <property type="entry name" value="Adenylosuccinate_synth_dom3"/>
</dbReference>
<dbReference type="InterPro" id="IPR001114">
    <property type="entry name" value="Adenylosuccinate_synthetase"/>
</dbReference>
<dbReference type="InterPro" id="IPR027417">
    <property type="entry name" value="P-loop_NTPase"/>
</dbReference>
<dbReference type="NCBIfam" id="NF002223">
    <property type="entry name" value="PRK01117.1"/>
    <property type="match status" value="1"/>
</dbReference>
<dbReference type="NCBIfam" id="TIGR00184">
    <property type="entry name" value="purA"/>
    <property type="match status" value="1"/>
</dbReference>
<dbReference type="PANTHER" id="PTHR11846">
    <property type="entry name" value="ADENYLOSUCCINATE SYNTHETASE"/>
    <property type="match status" value="1"/>
</dbReference>
<dbReference type="PANTHER" id="PTHR11846:SF0">
    <property type="entry name" value="ADENYLOSUCCINATE SYNTHETASE"/>
    <property type="match status" value="1"/>
</dbReference>
<dbReference type="Pfam" id="PF00709">
    <property type="entry name" value="Adenylsucc_synt"/>
    <property type="match status" value="1"/>
</dbReference>
<dbReference type="SMART" id="SM00788">
    <property type="entry name" value="Adenylsucc_synt"/>
    <property type="match status" value="1"/>
</dbReference>
<dbReference type="SUPFAM" id="SSF52540">
    <property type="entry name" value="P-loop containing nucleoside triphosphate hydrolases"/>
    <property type="match status" value="1"/>
</dbReference>
<dbReference type="PROSITE" id="PS01266">
    <property type="entry name" value="ADENYLOSUCCIN_SYN_1"/>
    <property type="match status" value="1"/>
</dbReference>
<dbReference type="PROSITE" id="PS00513">
    <property type="entry name" value="ADENYLOSUCCIN_SYN_2"/>
    <property type="match status" value="1"/>
</dbReference>
<reference key="1">
    <citation type="submission" date="2007-03" db="EMBL/GenBank/DDBJ databases">
        <title>Complete sequence of Shewanella loihica PV-4.</title>
        <authorList>
            <consortium name="US DOE Joint Genome Institute"/>
            <person name="Copeland A."/>
            <person name="Lucas S."/>
            <person name="Lapidus A."/>
            <person name="Barry K."/>
            <person name="Detter J.C."/>
            <person name="Glavina del Rio T."/>
            <person name="Hammon N."/>
            <person name="Israni S."/>
            <person name="Dalin E."/>
            <person name="Tice H."/>
            <person name="Pitluck S."/>
            <person name="Chain P."/>
            <person name="Malfatti S."/>
            <person name="Shin M."/>
            <person name="Vergez L."/>
            <person name="Schmutz J."/>
            <person name="Larimer F."/>
            <person name="Land M."/>
            <person name="Hauser L."/>
            <person name="Kyrpides N."/>
            <person name="Mikhailova N."/>
            <person name="Romine M.F."/>
            <person name="Serres G."/>
            <person name="Fredrickson J."/>
            <person name="Tiedje J."/>
            <person name="Richardson P."/>
        </authorList>
    </citation>
    <scope>NUCLEOTIDE SEQUENCE [LARGE SCALE GENOMIC DNA]</scope>
    <source>
        <strain>ATCC BAA-1088 / PV-4</strain>
    </source>
</reference>